<organism>
    <name type="scientific">Candida glabrata (strain ATCC 2001 / BCRC 20586 / JCM 3761 / NBRC 0622 / NRRL Y-65 / CBS 138)</name>
    <name type="common">Yeast</name>
    <name type="synonym">Nakaseomyces glabratus</name>
    <dbReference type="NCBI Taxonomy" id="284593"/>
    <lineage>
        <taxon>Eukaryota</taxon>
        <taxon>Fungi</taxon>
        <taxon>Dikarya</taxon>
        <taxon>Ascomycota</taxon>
        <taxon>Saccharomycotina</taxon>
        <taxon>Saccharomycetes</taxon>
        <taxon>Saccharomycetales</taxon>
        <taxon>Saccharomycetaceae</taxon>
        <taxon>Nakaseomyces</taxon>
    </lineage>
</organism>
<keyword id="KW-1185">Reference proteome</keyword>
<name>U508_CANGA</name>
<accession>Q6FJ97</accession>
<evidence type="ECO:0000305" key="1"/>
<protein>
    <recommendedName>
        <fullName>UPF0508 protein CAGL0M08074g</fullName>
    </recommendedName>
</protein>
<dbReference type="EMBL" id="CR380959">
    <property type="protein sequence ID" value="CAG62673.1"/>
    <property type="molecule type" value="Genomic_DNA"/>
</dbReference>
<dbReference type="RefSeq" id="XP_449697.1">
    <property type="nucleotide sequence ID" value="XM_449697.1"/>
</dbReference>
<dbReference type="FunCoup" id="Q6FJ97">
    <property type="interactions" value="4"/>
</dbReference>
<dbReference type="STRING" id="284593.Q6FJ97"/>
<dbReference type="EnsemblFungi" id="CAGL0M08074g-T">
    <property type="protein sequence ID" value="CAGL0M08074g-T-p1"/>
    <property type="gene ID" value="CAGL0M08074g"/>
</dbReference>
<dbReference type="KEGG" id="cgr:2891749"/>
<dbReference type="CGD" id="CAL0136749">
    <property type="gene designation" value="CAGL0M08074g"/>
</dbReference>
<dbReference type="VEuPathDB" id="FungiDB:CAGL0M08074g"/>
<dbReference type="eggNOG" id="ENOG502QTEC">
    <property type="taxonomic scope" value="Eukaryota"/>
</dbReference>
<dbReference type="HOGENOM" id="CLU_338632_0_0_1"/>
<dbReference type="InParanoid" id="Q6FJ97"/>
<dbReference type="OMA" id="LVVCESH"/>
<dbReference type="Proteomes" id="UP000002428">
    <property type="component" value="Chromosome M"/>
</dbReference>
<feature type="chain" id="PRO_0000311659" description="UPF0508 protein CAGL0M08074g">
    <location>
        <begin position="1"/>
        <end position="851"/>
    </location>
</feature>
<reference key="1">
    <citation type="journal article" date="2004" name="Nature">
        <title>Genome evolution in yeasts.</title>
        <authorList>
            <person name="Dujon B."/>
            <person name="Sherman D."/>
            <person name="Fischer G."/>
            <person name="Durrens P."/>
            <person name="Casaregola S."/>
            <person name="Lafontaine I."/>
            <person name="de Montigny J."/>
            <person name="Marck C."/>
            <person name="Neuveglise C."/>
            <person name="Talla E."/>
            <person name="Goffard N."/>
            <person name="Frangeul L."/>
            <person name="Aigle M."/>
            <person name="Anthouard V."/>
            <person name="Babour A."/>
            <person name="Barbe V."/>
            <person name="Barnay S."/>
            <person name="Blanchin S."/>
            <person name="Beckerich J.-M."/>
            <person name="Beyne E."/>
            <person name="Bleykasten C."/>
            <person name="Boisrame A."/>
            <person name="Boyer J."/>
            <person name="Cattolico L."/>
            <person name="Confanioleri F."/>
            <person name="de Daruvar A."/>
            <person name="Despons L."/>
            <person name="Fabre E."/>
            <person name="Fairhead C."/>
            <person name="Ferry-Dumazet H."/>
            <person name="Groppi A."/>
            <person name="Hantraye F."/>
            <person name="Hennequin C."/>
            <person name="Jauniaux N."/>
            <person name="Joyet P."/>
            <person name="Kachouri R."/>
            <person name="Kerrest A."/>
            <person name="Koszul R."/>
            <person name="Lemaire M."/>
            <person name="Lesur I."/>
            <person name="Ma L."/>
            <person name="Muller H."/>
            <person name="Nicaud J.-M."/>
            <person name="Nikolski M."/>
            <person name="Oztas S."/>
            <person name="Ozier-Kalogeropoulos O."/>
            <person name="Pellenz S."/>
            <person name="Potier S."/>
            <person name="Richard G.-F."/>
            <person name="Straub M.-L."/>
            <person name="Suleau A."/>
            <person name="Swennen D."/>
            <person name="Tekaia F."/>
            <person name="Wesolowski-Louvel M."/>
            <person name="Westhof E."/>
            <person name="Wirth B."/>
            <person name="Zeniou-Meyer M."/>
            <person name="Zivanovic Y."/>
            <person name="Bolotin-Fukuhara M."/>
            <person name="Thierry A."/>
            <person name="Bouchier C."/>
            <person name="Caudron B."/>
            <person name="Scarpelli C."/>
            <person name="Gaillardin C."/>
            <person name="Weissenbach J."/>
            <person name="Wincker P."/>
            <person name="Souciet J.-L."/>
        </authorList>
    </citation>
    <scope>NUCLEOTIDE SEQUENCE [LARGE SCALE GENOMIC DNA]</scope>
    <source>
        <strain>ATCC 2001 / BCRC 20586 / JCM 3761 / NBRC 0622 / NRRL Y-65 / CBS 138</strain>
    </source>
</reference>
<proteinExistence type="inferred from homology"/>
<sequence length="851" mass="97203">MDIHTLRSRWAYNVQLLKQLQWACTDTAKRSLNGTISNIEASSFANNLQKCTEALQFCIQKSLTIERTLKNYEIDVPLPVIKDVLLEQELMKYYTVILMEGCKLIFDYSISIFRIGTEPRFMLCLIKLYLNLDSITELLGNEGNQFSDLLNSFEYQFMTQYNIINCNTIHLDQVRDIFAKSNPLIAPPLLTVNDIEKRGYFFLSSVDLHIDNKLIEIAQLKNGHLAVFYVNSQRQSFSTNGAKQLLKELVEGRMELLNMGRTLLFQTLKQRDMVIFLEFEDSLELVTNNSLTKKLLIQCVDKVSWCTYWKIYLENLFSEEQARTNVKASTSMLNPSHSFQNFKIKHTKLSELRPVSHQGIALNIPQKKSQNCQANITKSDDLEEDPGFKFAIHQSNPINEIYTSQTEELITSPSLNEIEYLSYDKLIALDRSLELTLSPKLLESPREANYKTVSQTFSLDRINNISQNTPEVSDQESIVSNDELEKEPVFNPSVEDHKPQLLRKKSSLLSIFSNKNKSKNKNNLKLEINSQMSSSNLSLNSASSSRTFFSVNSNDSTSTTVSDKYIEDSDRFQLDNTTSILQLKVTKASCWDKSSWQVLSSFPLLLSLVKDHEAVYLTLQNPSNSGRFKFVTRISNIWKTTRSTAKDIQISIPTKDILATILDDLTNTTPRYQVLSLRTEEAERLKNTIDHCINGDMLSSISNSTTTRTLSSDASSSYMSQVSSNVSRSSTEVSDLNVHDFKSMASVKNILVLSDIKARLHTKNNGRWCPHHIGLVNIYSLETPNNKKGIRFELTTDTRTTFQFNSKIHDLKRLGRTGIAMIDDSEYLFEFPNNVITEQIYRYIAPSHPMI</sequence>
<gene>
    <name type="ordered locus">CAGL0M08074g</name>
</gene>
<comment type="similarity">
    <text evidence="1">Belongs to the UPF0508 family.</text>
</comment>